<keyword id="KW-0903">Direct protein sequencing</keyword>
<keyword id="KW-0378">Hydrolase</keyword>
<keyword id="KW-0546">Nucleotide metabolism</keyword>
<keyword id="KW-1185">Reference proteome</keyword>
<gene>
    <name evidence="1" type="primary">dut</name>
    <name type="ordered locus">MJ1102</name>
</gene>
<proteinExistence type="evidence at protein level"/>
<accession>Q58502</accession>
<feature type="initiator methionine" description="Removed" evidence="3">
    <location>
        <position position="1"/>
    </location>
</feature>
<feature type="chain" id="PRO_0000153638" description="Deoxyuridine 5'-triphosphate nucleotidohydrolase">
    <location>
        <begin position="2"/>
        <end position="156"/>
    </location>
</feature>
<evidence type="ECO:0000255" key="1">
    <source>
        <dbReference type="HAMAP-Rule" id="MF_00635"/>
    </source>
</evidence>
<evidence type="ECO:0000269" key="2">
    <source>
    </source>
</evidence>
<evidence type="ECO:0000269" key="3">
    <source>
    </source>
</evidence>
<evidence type="ECO:0000305" key="4"/>
<reference key="1">
    <citation type="journal article" date="1996" name="Science">
        <title>Complete genome sequence of the methanogenic archaeon, Methanococcus jannaschii.</title>
        <authorList>
            <person name="Bult C.J."/>
            <person name="White O."/>
            <person name="Olsen G.J."/>
            <person name="Zhou L."/>
            <person name="Fleischmann R.D."/>
            <person name="Sutton G.G."/>
            <person name="Blake J.A."/>
            <person name="FitzGerald L.M."/>
            <person name="Clayton R.A."/>
            <person name="Gocayne J.D."/>
            <person name="Kerlavage A.R."/>
            <person name="Dougherty B.A."/>
            <person name="Tomb J.-F."/>
            <person name="Adams M.D."/>
            <person name="Reich C.I."/>
            <person name="Overbeek R."/>
            <person name="Kirkness E.F."/>
            <person name="Weinstock K.G."/>
            <person name="Merrick J.M."/>
            <person name="Glodek A."/>
            <person name="Scott J.L."/>
            <person name="Geoghagen N.S.M."/>
            <person name="Weidman J.F."/>
            <person name="Fuhrmann J.L."/>
            <person name="Nguyen D."/>
            <person name="Utterback T.R."/>
            <person name="Kelley J.M."/>
            <person name="Peterson J.D."/>
            <person name="Sadow P.W."/>
            <person name="Hanna M.C."/>
            <person name="Cotton M.D."/>
            <person name="Roberts K.M."/>
            <person name="Hurst M.A."/>
            <person name="Kaine B.P."/>
            <person name="Borodovsky M."/>
            <person name="Klenk H.-P."/>
            <person name="Fraser C.M."/>
            <person name="Smith H.O."/>
            <person name="Woese C.R."/>
            <person name="Venter J.C."/>
        </authorList>
    </citation>
    <scope>NUCLEOTIDE SEQUENCE [LARGE SCALE GENOMIC DNA]</scope>
    <source>
        <strain>ATCC 43067 / DSM 2661 / JAL-1 / JCM 10045 / NBRC 100440</strain>
    </source>
</reference>
<reference key="2">
    <citation type="journal article" date="2003" name="J. Biol. Chem.">
        <title>A bifunctional dCTP deaminase-dUTP nucleotidohydrolase from the hyperthermophilic archaeon Methanocaldococcus jannaschii.</title>
        <authorList>
            <person name="Bjoernberg O."/>
            <person name="Neuhard J."/>
            <person name="Nyman P.O."/>
        </authorList>
    </citation>
    <scope>PROTEIN SEQUENCE OF 2-10</scope>
    <scope>FUNCTION</scope>
    <scope>CATALYTIC ACTIVITY</scope>
    <scope>BIOPHYSICOCHEMICAL PROPERTIES</scope>
    <scope>PATHWAY</scope>
</reference>
<reference key="3">
    <citation type="journal article" date="2003" name="J. Biol. Chem.">
        <title>The Methanococcus jannaschii dCTP deaminase is a bifunctional deaminase and diphosphatase.</title>
        <authorList>
            <person name="Li H."/>
            <person name="Xu H."/>
            <person name="Graham D.E."/>
            <person name="White R.H."/>
        </authorList>
    </citation>
    <scope>FUNCTION</scope>
    <scope>CATALYTIC ACTIVITY</scope>
    <scope>BIOPHYSICOCHEMICAL PROPERTIES</scope>
    <scope>PATHWAY</scope>
    <scope>SUBUNIT</scope>
</reference>
<name>DUT_METJA</name>
<dbReference type="EC" id="3.6.1.23" evidence="1 2 3"/>
<dbReference type="EMBL" id="L77117">
    <property type="protein sequence ID" value="AAB99105.1"/>
    <property type="status" value="ALT_INIT"/>
    <property type="molecule type" value="Genomic_DNA"/>
</dbReference>
<dbReference type="PIR" id="E64437">
    <property type="entry name" value="E64437"/>
</dbReference>
<dbReference type="RefSeq" id="WP_064496724.1">
    <property type="nucleotide sequence ID" value="NC_000909.1"/>
</dbReference>
<dbReference type="SMR" id="Q58502"/>
<dbReference type="FunCoup" id="Q58502">
    <property type="interactions" value="26"/>
</dbReference>
<dbReference type="STRING" id="243232.MJ_1102"/>
<dbReference type="PaxDb" id="243232-MJ_1102"/>
<dbReference type="EnsemblBacteria" id="AAB99105">
    <property type="protein sequence ID" value="AAB99105"/>
    <property type="gene ID" value="MJ_1102"/>
</dbReference>
<dbReference type="GeneID" id="1451999"/>
<dbReference type="KEGG" id="mja:MJ_1102"/>
<dbReference type="eggNOG" id="arCOG04048">
    <property type="taxonomic scope" value="Archaea"/>
</dbReference>
<dbReference type="HOGENOM" id="CLU_103451_2_0_2"/>
<dbReference type="InParanoid" id="Q58502"/>
<dbReference type="OrthoDB" id="45265at2157"/>
<dbReference type="PhylomeDB" id="Q58502"/>
<dbReference type="SABIO-RK" id="Q58502"/>
<dbReference type="UniPathway" id="UPA00610">
    <property type="reaction ID" value="UER00666"/>
</dbReference>
<dbReference type="Proteomes" id="UP000000805">
    <property type="component" value="Chromosome"/>
</dbReference>
<dbReference type="GO" id="GO:0008829">
    <property type="term" value="F:dCTP deaminase activity"/>
    <property type="evidence" value="ECO:0007669"/>
    <property type="project" value="InterPro"/>
</dbReference>
<dbReference type="GO" id="GO:0004170">
    <property type="term" value="F:dUTP diphosphatase activity"/>
    <property type="evidence" value="ECO:0007669"/>
    <property type="project" value="UniProtKB-UniRule"/>
</dbReference>
<dbReference type="GO" id="GO:0006226">
    <property type="term" value="P:dUMP biosynthetic process"/>
    <property type="evidence" value="ECO:0007669"/>
    <property type="project" value="UniProtKB-UniRule"/>
</dbReference>
<dbReference type="GO" id="GO:0006229">
    <property type="term" value="P:dUTP biosynthetic process"/>
    <property type="evidence" value="ECO:0007669"/>
    <property type="project" value="InterPro"/>
</dbReference>
<dbReference type="CDD" id="cd07557">
    <property type="entry name" value="trimeric_dUTPase"/>
    <property type="match status" value="1"/>
</dbReference>
<dbReference type="Gene3D" id="2.70.40.10">
    <property type="match status" value="1"/>
</dbReference>
<dbReference type="HAMAP" id="MF_00635">
    <property type="entry name" value="dUTPase_arch"/>
    <property type="match status" value="1"/>
</dbReference>
<dbReference type="InterPro" id="IPR011962">
    <property type="entry name" value="dCTP_deaminase"/>
</dbReference>
<dbReference type="InterPro" id="IPR036157">
    <property type="entry name" value="dUTPase-like_sf"/>
</dbReference>
<dbReference type="InterPro" id="IPR023537">
    <property type="entry name" value="dUTPase_archaeal"/>
</dbReference>
<dbReference type="InterPro" id="IPR033704">
    <property type="entry name" value="dUTPase_trimeric"/>
</dbReference>
<dbReference type="NCBIfam" id="NF002598">
    <property type="entry name" value="PRK02253.1"/>
    <property type="match status" value="1"/>
</dbReference>
<dbReference type="PANTHER" id="PTHR42680">
    <property type="entry name" value="DCTP DEAMINASE"/>
    <property type="match status" value="1"/>
</dbReference>
<dbReference type="PANTHER" id="PTHR42680:SF1">
    <property type="entry name" value="DEOXYURIDINE 5'-TRIPHOSPHATE NUCLEOTIDOHYDROLASE"/>
    <property type="match status" value="1"/>
</dbReference>
<dbReference type="Pfam" id="PF22769">
    <property type="entry name" value="DCD"/>
    <property type="match status" value="1"/>
</dbReference>
<dbReference type="SUPFAM" id="SSF51283">
    <property type="entry name" value="dUTPase-like"/>
    <property type="match status" value="1"/>
</dbReference>
<organism>
    <name type="scientific">Methanocaldococcus jannaschii (strain ATCC 43067 / DSM 2661 / JAL-1 / JCM 10045 / NBRC 100440)</name>
    <name type="common">Methanococcus jannaschii</name>
    <dbReference type="NCBI Taxonomy" id="243232"/>
    <lineage>
        <taxon>Archaea</taxon>
        <taxon>Methanobacteriati</taxon>
        <taxon>Methanobacteriota</taxon>
        <taxon>Methanomada group</taxon>
        <taxon>Methanococci</taxon>
        <taxon>Methanococcales</taxon>
        <taxon>Methanocaldococcaceae</taxon>
        <taxon>Methanocaldococcus</taxon>
    </lineage>
</organism>
<comment type="function">
    <text evidence="1 2 3">This enzyme is involved in nucleotide metabolism: it produces dUMP, the immediate precursor of thymidine nucleotides and it decreases the intracellular concentration of dUTP so that uracil cannot be incorporated into DNA.</text>
</comment>
<comment type="catalytic activity">
    <reaction evidence="1 2 3">
        <text>dUTP + H2O = dUMP + diphosphate + H(+)</text>
        <dbReference type="Rhea" id="RHEA:10248"/>
        <dbReference type="ChEBI" id="CHEBI:15377"/>
        <dbReference type="ChEBI" id="CHEBI:15378"/>
        <dbReference type="ChEBI" id="CHEBI:33019"/>
        <dbReference type="ChEBI" id="CHEBI:61555"/>
        <dbReference type="ChEBI" id="CHEBI:246422"/>
        <dbReference type="EC" id="3.6.1.23"/>
    </reaction>
</comment>
<comment type="biophysicochemical properties">
    <kinetics>
        <KM evidence="3">0.4 uM for dUTP</KM>
        <KM evidence="2">103 uM for dUTP</KM>
        <text evidence="2">kcat is 4.6 sec(-1).</text>
    </kinetics>
</comment>
<comment type="pathway">
    <text evidence="1 2 3">Pyrimidine metabolism; dUMP biosynthesis; dUMP from dCTP (dUTP route): step 2/2.</text>
</comment>
<comment type="subunit">
    <text evidence="2">Homotrimer.</text>
</comment>
<comment type="similarity">
    <text evidence="1 4">Belongs to the dCTP deaminase family. Archaeal dUTPase subfamily.</text>
</comment>
<comment type="sequence caution" evidence="4">
    <conflict type="erroneous initiation">
        <sequence resource="EMBL-CDS" id="AAB99105"/>
    </conflict>
    <text>Extended N-terminus.</text>
</comment>
<sequence length="156" mass="18070">MIIGANTSKNFFDNLEEEQIQQCGIDLRVWKIFKIEGEGVIDFSNEKRKLPNYIEIFNSEKDEHIKLDRGVYIVKVADYIKIPENVAGFAYPRSSLLRMGATLYSAVHDPGYEGRPEYLMQVFNPITIYKYARIAQIVFVECRDVKGVYEGIYKGR</sequence>
<protein>
    <recommendedName>
        <fullName evidence="4">Deoxyuridine 5'-triphosphate nucleotidohydrolase</fullName>
        <shortName evidence="1">dUTPase</shortName>
        <ecNumber evidence="1 2 3">3.6.1.23</ecNumber>
    </recommendedName>
    <alternativeName>
        <fullName>MjDUT</fullName>
    </alternativeName>
    <alternativeName>
        <fullName evidence="1">dUTP pyrophosphatase</fullName>
    </alternativeName>
</protein>